<proteinExistence type="inferred from homology"/>
<organism>
    <name type="scientific">Synechococcus elongatus (strain ATCC 33912 / PCC 7942 / FACHB-805)</name>
    <name type="common">Anacystis nidulans R2</name>
    <dbReference type="NCBI Taxonomy" id="1140"/>
    <lineage>
        <taxon>Bacteria</taxon>
        <taxon>Bacillati</taxon>
        <taxon>Cyanobacteriota</taxon>
        <taxon>Cyanophyceae</taxon>
        <taxon>Synechococcales</taxon>
        <taxon>Synechococcaceae</taxon>
        <taxon>Synechococcus</taxon>
    </lineage>
</organism>
<evidence type="ECO:0000255" key="1">
    <source>
        <dbReference type="HAMAP-Rule" id="MF_01815"/>
    </source>
</evidence>
<feature type="chain" id="PRO_1000056433" description="Beta-ketoacyl-[acyl-carrier-protein] synthase III">
    <location>
        <begin position="1"/>
        <end position="335"/>
    </location>
</feature>
<feature type="region of interest" description="ACP-binding" evidence="1">
    <location>
        <begin position="259"/>
        <end position="263"/>
    </location>
</feature>
<feature type="active site" evidence="1">
    <location>
        <position position="117"/>
    </location>
</feature>
<feature type="active site" evidence="1">
    <location>
        <position position="258"/>
    </location>
</feature>
<feature type="active site" evidence="1">
    <location>
        <position position="288"/>
    </location>
</feature>
<accession>Q31N84</accession>
<sequence>MTRPGVGVAITGSGSAVPSTTLSNDQLSQLVETSDEWIRSRTGIGQRRVAQPQIESLSSLAAAAGQSALEAAGLEATSVDLILLATSTPDDLFGSACQVQAALGATQAVAFDLTAACSGFLFALVTGAQFIRSGAYRTVLVIGADVLSRWTDWSDRRTCVLFGDGAGAVVLQASEIDQLLGFEMRSDGSLNGCLTLAYQADNQSLLSDIEIAQGTYQPVAMNGQEVYRFAVKRVPEILEKTLFHAGIDRQEVDWLLLHQANQRILDAVADRLDISRDRVLSNLVNYGNTSSATIPLVLDEAVKAGKIQSGDLIAASGFGAGLSWGAALFRWGTVV</sequence>
<name>FABH_SYNE7</name>
<reference key="1">
    <citation type="submission" date="2005-08" db="EMBL/GenBank/DDBJ databases">
        <title>Complete sequence of chromosome 1 of Synechococcus elongatus PCC 7942.</title>
        <authorList>
            <consortium name="US DOE Joint Genome Institute"/>
            <person name="Copeland A."/>
            <person name="Lucas S."/>
            <person name="Lapidus A."/>
            <person name="Barry K."/>
            <person name="Detter J.C."/>
            <person name="Glavina T."/>
            <person name="Hammon N."/>
            <person name="Israni S."/>
            <person name="Pitluck S."/>
            <person name="Schmutz J."/>
            <person name="Larimer F."/>
            <person name="Land M."/>
            <person name="Kyrpides N."/>
            <person name="Lykidis A."/>
            <person name="Golden S."/>
            <person name="Richardson P."/>
        </authorList>
    </citation>
    <scope>NUCLEOTIDE SEQUENCE [LARGE SCALE GENOMIC DNA]</scope>
    <source>
        <strain>ATCC 33912 / PCC 7942 / FACHB-805</strain>
    </source>
</reference>
<gene>
    <name evidence="1" type="primary">fabH</name>
    <name type="ordered locus">Synpcc7942_1455</name>
</gene>
<protein>
    <recommendedName>
        <fullName evidence="1">Beta-ketoacyl-[acyl-carrier-protein] synthase III</fullName>
        <shortName evidence="1">Beta-ketoacyl-ACP synthase III</shortName>
        <shortName evidence="1">KAS III</shortName>
        <ecNumber evidence="1">2.3.1.180</ecNumber>
    </recommendedName>
    <alternativeName>
        <fullName evidence="1">3-oxoacyl-[acyl-carrier-protein] synthase 3</fullName>
    </alternativeName>
    <alternativeName>
        <fullName evidence="1">3-oxoacyl-[acyl-carrier-protein] synthase III</fullName>
    </alternativeName>
</protein>
<comment type="function">
    <text evidence="1">Catalyzes the condensation reaction of fatty acid synthesis by the addition to an acyl acceptor of two carbons from malonyl-ACP. Catalyzes the first condensation reaction which initiates fatty acid synthesis and may therefore play a role in governing the total rate of fatty acid production. Possesses both acetoacetyl-ACP synthase and acetyl transacylase activities. Its substrate specificity determines the biosynthesis of branched-chain and/or straight-chain of fatty acids.</text>
</comment>
<comment type="catalytic activity">
    <reaction evidence="1">
        <text>malonyl-[ACP] + acetyl-CoA + H(+) = 3-oxobutanoyl-[ACP] + CO2 + CoA</text>
        <dbReference type="Rhea" id="RHEA:12080"/>
        <dbReference type="Rhea" id="RHEA-COMP:9623"/>
        <dbReference type="Rhea" id="RHEA-COMP:9625"/>
        <dbReference type="ChEBI" id="CHEBI:15378"/>
        <dbReference type="ChEBI" id="CHEBI:16526"/>
        <dbReference type="ChEBI" id="CHEBI:57287"/>
        <dbReference type="ChEBI" id="CHEBI:57288"/>
        <dbReference type="ChEBI" id="CHEBI:78449"/>
        <dbReference type="ChEBI" id="CHEBI:78450"/>
        <dbReference type="EC" id="2.3.1.180"/>
    </reaction>
</comment>
<comment type="pathway">
    <text evidence="1">Lipid metabolism; fatty acid biosynthesis.</text>
</comment>
<comment type="subunit">
    <text evidence="1">Homodimer.</text>
</comment>
<comment type="subcellular location">
    <subcellularLocation>
        <location evidence="1">Cytoplasm</location>
    </subcellularLocation>
</comment>
<comment type="domain">
    <text evidence="1">The last Arg residue of the ACP-binding site is essential for the weak association between ACP/AcpP and FabH.</text>
</comment>
<comment type="similarity">
    <text evidence="1">Belongs to the thiolase-like superfamily. FabH family.</text>
</comment>
<dbReference type="EC" id="2.3.1.180" evidence="1"/>
<dbReference type="EMBL" id="CP000100">
    <property type="protein sequence ID" value="ABB57485.1"/>
    <property type="molecule type" value="Genomic_DNA"/>
</dbReference>
<dbReference type="RefSeq" id="WP_011242415.1">
    <property type="nucleotide sequence ID" value="NZ_JACJTX010000004.1"/>
</dbReference>
<dbReference type="SMR" id="Q31N84"/>
<dbReference type="STRING" id="1140.Synpcc7942_1455"/>
<dbReference type="PaxDb" id="1140-Synpcc7942_1455"/>
<dbReference type="KEGG" id="syf:Synpcc7942_1455"/>
<dbReference type="eggNOG" id="COG0332">
    <property type="taxonomic scope" value="Bacteria"/>
</dbReference>
<dbReference type="HOGENOM" id="CLU_039592_0_1_3"/>
<dbReference type="OrthoDB" id="9815506at2"/>
<dbReference type="BioCyc" id="SYNEL:SYNPCC7942_1455-MONOMER"/>
<dbReference type="UniPathway" id="UPA00094"/>
<dbReference type="Proteomes" id="UP000889800">
    <property type="component" value="Chromosome"/>
</dbReference>
<dbReference type="GO" id="GO:0005737">
    <property type="term" value="C:cytoplasm"/>
    <property type="evidence" value="ECO:0007669"/>
    <property type="project" value="UniProtKB-SubCell"/>
</dbReference>
<dbReference type="GO" id="GO:0004315">
    <property type="term" value="F:3-oxoacyl-[acyl-carrier-protein] synthase activity"/>
    <property type="evidence" value="ECO:0007669"/>
    <property type="project" value="InterPro"/>
</dbReference>
<dbReference type="GO" id="GO:0033818">
    <property type="term" value="F:beta-ketoacyl-acyl-carrier-protein synthase III activity"/>
    <property type="evidence" value="ECO:0007669"/>
    <property type="project" value="UniProtKB-UniRule"/>
</dbReference>
<dbReference type="GO" id="GO:0006633">
    <property type="term" value="P:fatty acid biosynthetic process"/>
    <property type="evidence" value="ECO:0007669"/>
    <property type="project" value="UniProtKB-UniRule"/>
</dbReference>
<dbReference type="CDD" id="cd00830">
    <property type="entry name" value="KAS_III"/>
    <property type="match status" value="1"/>
</dbReference>
<dbReference type="FunFam" id="3.40.47.10:FF:000004">
    <property type="entry name" value="3-oxoacyl-[acyl-carrier-protein] synthase 3"/>
    <property type="match status" value="1"/>
</dbReference>
<dbReference type="Gene3D" id="3.40.47.10">
    <property type="match status" value="1"/>
</dbReference>
<dbReference type="HAMAP" id="MF_01815">
    <property type="entry name" value="FabH"/>
    <property type="match status" value="1"/>
</dbReference>
<dbReference type="InterPro" id="IPR013747">
    <property type="entry name" value="ACP_syn_III_C"/>
</dbReference>
<dbReference type="InterPro" id="IPR013751">
    <property type="entry name" value="ACP_syn_III_N"/>
</dbReference>
<dbReference type="InterPro" id="IPR004655">
    <property type="entry name" value="FabH"/>
</dbReference>
<dbReference type="InterPro" id="IPR016039">
    <property type="entry name" value="Thiolase-like"/>
</dbReference>
<dbReference type="NCBIfam" id="TIGR00747">
    <property type="entry name" value="fabH"/>
    <property type="match status" value="1"/>
</dbReference>
<dbReference type="NCBIfam" id="NF006829">
    <property type="entry name" value="PRK09352.1"/>
    <property type="match status" value="1"/>
</dbReference>
<dbReference type="PANTHER" id="PTHR43091">
    <property type="entry name" value="3-OXOACYL-[ACYL-CARRIER-PROTEIN] SYNTHASE"/>
    <property type="match status" value="1"/>
</dbReference>
<dbReference type="PANTHER" id="PTHR43091:SF1">
    <property type="entry name" value="BETA-KETOACYL-[ACYL-CARRIER-PROTEIN] SYNTHASE III, CHLOROPLASTIC"/>
    <property type="match status" value="1"/>
</dbReference>
<dbReference type="Pfam" id="PF08545">
    <property type="entry name" value="ACP_syn_III"/>
    <property type="match status" value="1"/>
</dbReference>
<dbReference type="Pfam" id="PF08541">
    <property type="entry name" value="ACP_syn_III_C"/>
    <property type="match status" value="1"/>
</dbReference>
<dbReference type="SUPFAM" id="SSF53901">
    <property type="entry name" value="Thiolase-like"/>
    <property type="match status" value="1"/>
</dbReference>
<keyword id="KW-0012">Acyltransferase</keyword>
<keyword id="KW-0963">Cytoplasm</keyword>
<keyword id="KW-0275">Fatty acid biosynthesis</keyword>
<keyword id="KW-0276">Fatty acid metabolism</keyword>
<keyword id="KW-0444">Lipid biosynthesis</keyword>
<keyword id="KW-0443">Lipid metabolism</keyword>
<keyword id="KW-0511">Multifunctional enzyme</keyword>
<keyword id="KW-1185">Reference proteome</keyword>
<keyword id="KW-0808">Transferase</keyword>